<organism>
    <name type="scientific">Escherichia coli (strain K12 / MC4100 / BW2952)</name>
    <dbReference type="NCBI Taxonomy" id="595496"/>
    <lineage>
        <taxon>Bacteria</taxon>
        <taxon>Pseudomonadati</taxon>
        <taxon>Pseudomonadota</taxon>
        <taxon>Gammaproteobacteria</taxon>
        <taxon>Enterobacterales</taxon>
        <taxon>Enterobacteriaceae</taxon>
        <taxon>Escherichia</taxon>
    </lineage>
</organism>
<dbReference type="EMBL" id="CP001396">
    <property type="protein sequence ID" value="ACR65550.1"/>
    <property type="molecule type" value="Genomic_DNA"/>
</dbReference>
<dbReference type="RefSeq" id="WP_000108454.1">
    <property type="nucleotide sequence ID" value="NC_012759.1"/>
</dbReference>
<dbReference type="SMR" id="C4ZSW2"/>
<dbReference type="KEGG" id="ebw:BWG_2925"/>
<dbReference type="HOGENOM" id="CLU_001265_46_8_6"/>
<dbReference type="GO" id="GO:0005886">
    <property type="term" value="C:plasma membrane"/>
    <property type="evidence" value="ECO:0007669"/>
    <property type="project" value="UniProtKB-SubCell"/>
</dbReference>
<dbReference type="GO" id="GO:0046943">
    <property type="term" value="F:carboxylic acid transmembrane transporter activity"/>
    <property type="evidence" value="ECO:0007669"/>
    <property type="project" value="TreeGrafter"/>
</dbReference>
<dbReference type="GO" id="GO:0015538">
    <property type="term" value="F:sialic acid:proton symporter activity"/>
    <property type="evidence" value="ECO:0007669"/>
    <property type="project" value="UniProtKB-UniRule"/>
</dbReference>
<dbReference type="CDD" id="cd17316">
    <property type="entry name" value="MFS_SV2_like"/>
    <property type="match status" value="1"/>
</dbReference>
<dbReference type="FunFam" id="1.20.1250.20:FF:000027">
    <property type="entry name" value="Sialic acid transporter NanT"/>
    <property type="match status" value="1"/>
</dbReference>
<dbReference type="FunFam" id="1.20.1250.20:FF:000038">
    <property type="entry name" value="Sialic acid transporter NanT"/>
    <property type="match status" value="1"/>
</dbReference>
<dbReference type="Gene3D" id="1.20.1250.20">
    <property type="entry name" value="MFS general substrate transporter like domains"/>
    <property type="match status" value="2"/>
</dbReference>
<dbReference type="HAMAP" id="MF_01238">
    <property type="entry name" value="MFS_NanT"/>
    <property type="match status" value="1"/>
</dbReference>
<dbReference type="InterPro" id="IPR011701">
    <property type="entry name" value="MFS"/>
</dbReference>
<dbReference type="InterPro" id="IPR020846">
    <property type="entry name" value="MFS_dom"/>
</dbReference>
<dbReference type="InterPro" id="IPR036259">
    <property type="entry name" value="MFS_trans_sf"/>
</dbReference>
<dbReference type="InterPro" id="IPR004742">
    <property type="entry name" value="SA_transporter"/>
</dbReference>
<dbReference type="NCBIfam" id="TIGR00891">
    <property type="entry name" value="2A0112"/>
    <property type="match status" value="1"/>
</dbReference>
<dbReference type="NCBIfam" id="NF003024">
    <property type="entry name" value="PRK03893.1"/>
    <property type="match status" value="1"/>
</dbReference>
<dbReference type="PANTHER" id="PTHR23508">
    <property type="entry name" value="CARBOXYLIC ACID TRANSPORTER PROTEIN HOMOLOG"/>
    <property type="match status" value="1"/>
</dbReference>
<dbReference type="PANTHER" id="PTHR23508:SF3">
    <property type="entry name" value="SIALIC ACID TRANSPORTER NANT"/>
    <property type="match status" value="1"/>
</dbReference>
<dbReference type="Pfam" id="PF07690">
    <property type="entry name" value="MFS_1"/>
    <property type="match status" value="1"/>
</dbReference>
<dbReference type="SUPFAM" id="SSF103473">
    <property type="entry name" value="MFS general substrate transporter"/>
    <property type="match status" value="1"/>
</dbReference>
<dbReference type="PROSITE" id="PS50850">
    <property type="entry name" value="MFS"/>
    <property type="match status" value="1"/>
</dbReference>
<feature type="chain" id="PRO_1000214046" description="Sialic acid transporter NanT">
    <location>
        <begin position="1"/>
        <end position="496"/>
    </location>
</feature>
<feature type="transmembrane region" description="Helical" evidence="1">
    <location>
        <begin position="22"/>
        <end position="42"/>
    </location>
</feature>
<feature type="transmembrane region" description="Helical" evidence="1">
    <location>
        <begin position="58"/>
        <end position="78"/>
    </location>
</feature>
<feature type="transmembrane region" description="Helical" evidence="1">
    <location>
        <begin position="92"/>
        <end position="112"/>
    </location>
</feature>
<feature type="transmembrane region" description="Helical" evidence="1">
    <location>
        <begin position="116"/>
        <end position="136"/>
    </location>
</feature>
<feature type="transmembrane region" description="Helical" evidence="1">
    <location>
        <begin position="148"/>
        <end position="168"/>
    </location>
</feature>
<feature type="transmembrane region" description="Helical" evidence="1">
    <location>
        <begin position="170"/>
        <end position="190"/>
    </location>
</feature>
<feature type="transmembrane region" description="Helical" evidence="1">
    <location>
        <begin position="224"/>
        <end position="244"/>
    </location>
</feature>
<feature type="transmembrane region" description="Helical" evidence="1">
    <location>
        <begin position="247"/>
        <end position="267"/>
    </location>
</feature>
<feature type="transmembrane region" description="Helical" evidence="1">
    <location>
        <begin position="278"/>
        <end position="298"/>
    </location>
</feature>
<feature type="transmembrane region" description="Helical" evidence="1">
    <location>
        <begin position="313"/>
        <end position="333"/>
    </location>
</feature>
<feature type="transmembrane region" description="Helical" evidence="1">
    <location>
        <begin position="353"/>
        <end position="375"/>
    </location>
</feature>
<feature type="transmembrane region" description="Helical" evidence="1">
    <location>
        <begin position="406"/>
        <end position="426"/>
    </location>
</feature>
<feature type="transmembrane region" description="Helical" evidence="1">
    <location>
        <begin position="431"/>
        <end position="451"/>
    </location>
</feature>
<comment type="function">
    <text evidence="1">Catalyzes the proton-dependent transport of sialic acid.</text>
</comment>
<comment type="catalytic activity">
    <reaction evidence="1">
        <text>N-acetylneuraminate(in) + H(+)(in) = N-acetylneuraminate(out) + H(+)(out)</text>
        <dbReference type="Rhea" id="RHEA:28987"/>
        <dbReference type="ChEBI" id="CHEBI:15378"/>
        <dbReference type="ChEBI" id="CHEBI:35418"/>
    </reaction>
</comment>
<comment type="subcellular location">
    <subcellularLocation>
        <location evidence="1">Cell inner membrane</location>
        <topology evidence="1">Multi-pass membrane protein</topology>
    </subcellularLocation>
</comment>
<comment type="similarity">
    <text evidence="1">Belongs to the major facilitator superfamily. Sialate:H(+) symporter (SHS) (TC 2.A.1.12) family.</text>
</comment>
<accession>C4ZSW2</accession>
<reference key="1">
    <citation type="journal article" date="2009" name="J. Bacteriol.">
        <title>Genomic sequencing reveals regulatory mutations and recombinational events in the widely used MC4100 lineage of Escherichia coli K-12.</title>
        <authorList>
            <person name="Ferenci T."/>
            <person name="Zhou Z."/>
            <person name="Betteridge T."/>
            <person name="Ren Y."/>
            <person name="Liu Y."/>
            <person name="Feng L."/>
            <person name="Reeves P.R."/>
            <person name="Wang L."/>
        </authorList>
    </citation>
    <scope>NUCLEOTIDE SEQUENCE [LARGE SCALE GENOMIC DNA]</scope>
    <source>
        <strain>K12 / MC4100 / BW2952</strain>
    </source>
</reference>
<sequence length="496" mass="53551">MSTTTQNIPWYRHLNRAQWRAFSAAWLGYLLDGFDFVLIALVLTEVQGEFGLTTVQAASLISAAFISRWFGGLMLGAMGDRYGRRLAMVTSIVLFSAGTLACGFAPGYITMFIARLVIGMGMAGEYGSSATYVIESWPKHLRNKASGFLISGFSVGAVVAAQVYSLVVPVWGWRALFFIGILPIIFALWLRKNIPEAEDWKEKHAGKAPVRTMVDILYRGEHRIANIVMTLAAATALWFCFAGNLQNAAIVAVLGLLCAAIFISFMVQSAGKRWPTGVMLMVVVLFAFLYSWPIQALLPTYLKTDLAYNPHTVANVLFFSGFGAAVGCCVGGFLGDWLGTRKAYVCSLLASQLLIIPVFAIGGANVWVLGLLLFFQQMLGQGIAGILPKLIGGYFDTDQRAAGLGFTYNVGALGGALAPIIGALIAQRLDLGTALASLSFSLTFVVILLIGLDMPSRVQRWLRPEALRTHDAIDGKPFSGAVPFGSAKNDLVKTKS</sequence>
<name>NANT_ECOBW</name>
<keyword id="KW-0997">Cell inner membrane</keyword>
<keyword id="KW-1003">Cell membrane</keyword>
<keyword id="KW-0472">Membrane</keyword>
<keyword id="KW-0762">Sugar transport</keyword>
<keyword id="KW-0812">Transmembrane</keyword>
<keyword id="KW-1133">Transmembrane helix</keyword>
<keyword id="KW-0813">Transport</keyword>
<protein>
    <recommendedName>
        <fullName evidence="1">Sialic acid transporter NanT</fullName>
    </recommendedName>
    <alternativeName>
        <fullName evidence="1">Sialic acid permease</fullName>
    </alternativeName>
    <alternativeName>
        <fullName evidence="1">Sialic acid/H(+) symporter</fullName>
    </alternativeName>
</protein>
<proteinExistence type="inferred from homology"/>
<evidence type="ECO:0000255" key="1">
    <source>
        <dbReference type="HAMAP-Rule" id="MF_01238"/>
    </source>
</evidence>
<gene>
    <name evidence="1" type="primary">nanT</name>
    <name type="ordered locus">BWG_2925</name>
</gene>